<name>MURB_STAAT</name>
<keyword id="KW-0131">Cell cycle</keyword>
<keyword id="KW-0132">Cell division</keyword>
<keyword id="KW-0133">Cell shape</keyword>
<keyword id="KW-0961">Cell wall biogenesis/degradation</keyword>
<keyword id="KW-0963">Cytoplasm</keyword>
<keyword id="KW-0274">FAD</keyword>
<keyword id="KW-0285">Flavoprotein</keyword>
<keyword id="KW-0521">NADP</keyword>
<keyword id="KW-0560">Oxidoreductase</keyword>
<keyword id="KW-0573">Peptidoglycan synthesis</keyword>
<dbReference type="EC" id="1.3.1.98" evidence="1"/>
<dbReference type="EMBL" id="CP000730">
    <property type="protein sequence ID" value="ABX28785.1"/>
    <property type="molecule type" value="Genomic_DNA"/>
</dbReference>
<dbReference type="RefSeq" id="WP_000608440.1">
    <property type="nucleotide sequence ID" value="NC_010079.1"/>
</dbReference>
<dbReference type="SMR" id="A8Z012"/>
<dbReference type="KEGG" id="sax:USA300HOU_0764"/>
<dbReference type="HOGENOM" id="CLU_035304_1_1_9"/>
<dbReference type="UniPathway" id="UPA00219"/>
<dbReference type="GO" id="GO:0005829">
    <property type="term" value="C:cytosol"/>
    <property type="evidence" value="ECO:0007669"/>
    <property type="project" value="TreeGrafter"/>
</dbReference>
<dbReference type="GO" id="GO:0071949">
    <property type="term" value="F:FAD binding"/>
    <property type="evidence" value="ECO:0007669"/>
    <property type="project" value="InterPro"/>
</dbReference>
<dbReference type="GO" id="GO:0008762">
    <property type="term" value="F:UDP-N-acetylmuramate dehydrogenase activity"/>
    <property type="evidence" value="ECO:0007669"/>
    <property type="project" value="UniProtKB-UniRule"/>
</dbReference>
<dbReference type="GO" id="GO:0051301">
    <property type="term" value="P:cell division"/>
    <property type="evidence" value="ECO:0007669"/>
    <property type="project" value="UniProtKB-KW"/>
</dbReference>
<dbReference type="GO" id="GO:0071555">
    <property type="term" value="P:cell wall organization"/>
    <property type="evidence" value="ECO:0007669"/>
    <property type="project" value="UniProtKB-KW"/>
</dbReference>
<dbReference type="GO" id="GO:0009252">
    <property type="term" value="P:peptidoglycan biosynthetic process"/>
    <property type="evidence" value="ECO:0007669"/>
    <property type="project" value="UniProtKB-UniRule"/>
</dbReference>
<dbReference type="GO" id="GO:0008360">
    <property type="term" value="P:regulation of cell shape"/>
    <property type="evidence" value="ECO:0007669"/>
    <property type="project" value="UniProtKB-KW"/>
</dbReference>
<dbReference type="FunFam" id="3.90.78.10:FF:000001">
    <property type="entry name" value="UDP-N-acetylenolpyruvoylglucosamine reductase"/>
    <property type="match status" value="1"/>
</dbReference>
<dbReference type="Gene3D" id="3.30.465.10">
    <property type="match status" value="1"/>
</dbReference>
<dbReference type="Gene3D" id="3.90.78.10">
    <property type="entry name" value="UDP-N-acetylenolpyruvoylglucosamine reductase, C-terminal domain"/>
    <property type="match status" value="1"/>
</dbReference>
<dbReference type="Gene3D" id="3.30.43.10">
    <property type="entry name" value="Uridine Diphospho-n-acetylenolpyruvylglucosamine Reductase, domain 2"/>
    <property type="match status" value="1"/>
</dbReference>
<dbReference type="HAMAP" id="MF_00037">
    <property type="entry name" value="MurB"/>
    <property type="match status" value="1"/>
</dbReference>
<dbReference type="InterPro" id="IPR016166">
    <property type="entry name" value="FAD-bd_PCMH"/>
</dbReference>
<dbReference type="InterPro" id="IPR036318">
    <property type="entry name" value="FAD-bd_PCMH-like_sf"/>
</dbReference>
<dbReference type="InterPro" id="IPR016167">
    <property type="entry name" value="FAD-bd_PCMH_sub1"/>
</dbReference>
<dbReference type="InterPro" id="IPR016169">
    <property type="entry name" value="FAD-bd_PCMH_sub2"/>
</dbReference>
<dbReference type="InterPro" id="IPR003170">
    <property type="entry name" value="MurB"/>
</dbReference>
<dbReference type="InterPro" id="IPR011601">
    <property type="entry name" value="MurB_C"/>
</dbReference>
<dbReference type="InterPro" id="IPR036635">
    <property type="entry name" value="MurB_C_sf"/>
</dbReference>
<dbReference type="InterPro" id="IPR006094">
    <property type="entry name" value="Oxid_FAD_bind_N"/>
</dbReference>
<dbReference type="NCBIfam" id="TIGR00179">
    <property type="entry name" value="murB"/>
    <property type="match status" value="1"/>
</dbReference>
<dbReference type="NCBIfam" id="NF010480">
    <property type="entry name" value="PRK13905.1"/>
    <property type="match status" value="1"/>
</dbReference>
<dbReference type="PANTHER" id="PTHR21071">
    <property type="entry name" value="UDP-N-ACETYLENOLPYRUVOYLGLUCOSAMINE REDUCTASE"/>
    <property type="match status" value="1"/>
</dbReference>
<dbReference type="PANTHER" id="PTHR21071:SF4">
    <property type="entry name" value="UDP-N-ACETYLENOLPYRUVOYLGLUCOSAMINE REDUCTASE"/>
    <property type="match status" value="1"/>
</dbReference>
<dbReference type="Pfam" id="PF01565">
    <property type="entry name" value="FAD_binding_4"/>
    <property type="match status" value="1"/>
</dbReference>
<dbReference type="Pfam" id="PF02873">
    <property type="entry name" value="MurB_C"/>
    <property type="match status" value="1"/>
</dbReference>
<dbReference type="SUPFAM" id="SSF56176">
    <property type="entry name" value="FAD-binding/transporter-associated domain-like"/>
    <property type="match status" value="1"/>
</dbReference>
<dbReference type="SUPFAM" id="SSF56194">
    <property type="entry name" value="Uridine diphospho-N-Acetylenolpyruvylglucosamine reductase, MurB, C-terminal domain"/>
    <property type="match status" value="1"/>
</dbReference>
<dbReference type="PROSITE" id="PS51387">
    <property type="entry name" value="FAD_PCMH"/>
    <property type="match status" value="1"/>
</dbReference>
<accession>A8Z012</accession>
<sequence>MINKDIYQALQQLIPNEKIKVDEPLKRYTYTKTGGNADFYITPTKNEEVQAVVKYAYQNEIPVTYLGNGSNIIIREGGIRGIVISLLSLDHIEVSDDAIIAGSGAAIIDVSRVARDYALTGLEFACGIPGSIGGAVYMNAGAYGGEVKDCIDYALCVNEQGSLIKLTTKELELDYRNSIIQKEHLVVLEAAFTLAPGKMTEIQAKMDDLTERRESKQPLEYPSCGSVFQRPPGHFAGKLIQDSNLQGHRIGGVEVSTKHAGFMVNVDNGTATDYENLIHYVQKTVKEKFGIELNREVRIIGEHPKES</sequence>
<gene>
    <name evidence="1" type="primary">murB</name>
    <name type="ordered locus">USA300HOU_0764</name>
</gene>
<reference key="1">
    <citation type="journal article" date="2007" name="BMC Microbiol.">
        <title>Subtle genetic changes enhance virulence of methicillin resistant and sensitive Staphylococcus aureus.</title>
        <authorList>
            <person name="Highlander S.K."/>
            <person name="Hulten K.G."/>
            <person name="Qin X."/>
            <person name="Jiang H."/>
            <person name="Yerrapragada S."/>
            <person name="Mason E.O. Jr."/>
            <person name="Shang Y."/>
            <person name="Williams T.M."/>
            <person name="Fortunov R.M."/>
            <person name="Liu Y."/>
            <person name="Igboeli O."/>
            <person name="Petrosino J."/>
            <person name="Tirumalai M."/>
            <person name="Uzman A."/>
            <person name="Fox G.E."/>
            <person name="Cardenas A.M."/>
            <person name="Muzny D.M."/>
            <person name="Hemphill L."/>
            <person name="Ding Y."/>
            <person name="Dugan S."/>
            <person name="Blyth P.R."/>
            <person name="Buhay C.J."/>
            <person name="Dinh H.H."/>
            <person name="Hawes A.C."/>
            <person name="Holder M."/>
            <person name="Kovar C.L."/>
            <person name="Lee S.L."/>
            <person name="Liu W."/>
            <person name="Nazareth L.V."/>
            <person name="Wang Q."/>
            <person name="Zhou J."/>
            <person name="Kaplan S.L."/>
            <person name="Weinstock G.M."/>
        </authorList>
    </citation>
    <scope>NUCLEOTIDE SEQUENCE [LARGE SCALE GENOMIC DNA]</scope>
    <source>
        <strain>USA300 / TCH1516</strain>
    </source>
</reference>
<comment type="function">
    <text evidence="1">Cell wall formation.</text>
</comment>
<comment type="catalytic activity">
    <reaction evidence="1">
        <text>UDP-N-acetyl-alpha-D-muramate + NADP(+) = UDP-N-acetyl-3-O-(1-carboxyvinyl)-alpha-D-glucosamine + NADPH + H(+)</text>
        <dbReference type="Rhea" id="RHEA:12248"/>
        <dbReference type="ChEBI" id="CHEBI:15378"/>
        <dbReference type="ChEBI" id="CHEBI:57783"/>
        <dbReference type="ChEBI" id="CHEBI:58349"/>
        <dbReference type="ChEBI" id="CHEBI:68483"/>
        <dbReference type="ChEBI" id="CHEBI:70757"/>
        <dbReference type="EC" id="1.3.1.98"/>
    </reaction>
</comment>
<comment type="cofactor">
    <cofactor evidence="1">
        <name>FAD</name>
        <dbReference type="ChEBI" id="CHEBI:57692"/>
    </cofactor>
</comment>
<comment type="pathway">
    <text evidence="1">Cell wall biogenesis; peptidoglycan biosynthesis.</text>
</comment>
<comment type="subcellular location">
    <subcellularLocation>
        <location evidence="1">Cytoplasm</location>
    </subcellularLocation>
</comment>
<comment type="similarity">
    <text evidence="1">Belongs to the MurB family.</text>
</comment>
<organism>
    <name type="scientific">Staphylococcus aureus (strain USA300 / TCH1516)</name>
    <dbReference type="NCBI Taxonomy" id="451516"/>
    <lineage>
        <taxon>Bacteria</taxon>
        <taxon>Bacillati</taxon>
        <taxon>Bacillota</taxon>
        <taxon>Bacilli</taxon>
        <taxon>Bacillales</taxon>
        <taxon>Staphylococcaceae</taxon>
        <taxon>Staphylococcus</taxon>
    </lineage>
</organism>
<evidence type="ECO:0000255" key="1">
    <source>
        <dbReference type="HAMAP-Rule" id="MF_00037"/>
    </source>
</evidence>
<proteinExistence type="inferred from homology"/>
<feature type="chain" id="PRO_1000074529" description="UDP-N-acetylenolpyruvoylglucosamine reductase">
    <location>
        <begin position="1"/>
        <end position="307"/>
    </location>
</feature>
<feature type="domain" description="FAD-binding PCMH-type" evidence="1">
    <location>
        <begin position="33"/>
        <end position="197"/>
    </location>
</feature>
<feature type="active site" evidence="1">
    <location>
        <position position="176"/>
    </location>
</feature>
<feature type="active site" description="Proton donor" evidence="1">
    <location>
        <position position="226"/>
    </location>
</feature>
<feature type="active site" evidence="1">
    <location>
        <position position="296"/>
    </location>
</feature>
<protein>
    <recommendedName>
        <fullName evidence="1">UDP-N-acetylenolpyruvoylglucosamine reductase</fullName>
        <ecNumber evidence="1">1.3.1.98</ecNumber>
    </recommendedName>
    <alternativeName>
        <fullName evidence="1">UDP-N-acetylmuramate dehydrogenase</fullName>
    </alternativeName>
</protein>